<sequence length="367" mass="40415">MNSHECGAQACVCCPVLGEAIAAGNEGRGDTAHAPVRGTVVVQPQRDGYGRARPREPIEIDPWFGHDSSTASVVFPQRGRPWVTCDWPLDVTVRSPRATWDARFFCGYAFRPATADGTRSCLLGVPGDAGMSRVVCRPPPNEREIDVRVSPGECLEFSMAIIAPGSEMFWTAVPPRELLDYVCAKAMLLMDCLLSERVSRKAAIVPMLLLQEEAFLPSDRKRARWSDPDTPGRPLVTAEHAYASGARLECPFVIDLARRRNNFWAGMGLAFLPRTALSTRERILAKFCAHHIIIDVMTNLGREVVIPAALSMPGESVVMVVTSDEHGLRIDVRERRPTLNAQRAHAAAQQQPRRRNRRQQGTGASAS</sequence>
<organismHost>
    <name type="scientific">Amazona oratrix</name>
    <name type="common">yellow-headed parrot</name>
    <dbReference type="NCBI Taxonomy" id="152276"/>
</organismHost>
<keyword id="KW-1185">Reference proteome</keyword>
<accession>Q6UDL4</accession>
<reference key="1">
    <citation type="journal article" date="2006" name="J. Virol.">
        <title>Psittacid herpesvirus 1 and infectious laryngotracheitis virus: Comparative genome sequence analysis of two avian alphaherpesviruses.</title>
        <authorList>
            <person name="Thureen D.R."/>
            <person name="Keeler C.L. Jr."/>
        </authorList>
    </citation>
    <scope>NUCLEOTIDE SEQUENCE [LARGE SCALE GENOMIC DNA]</scope>
</reference>
<name>ORFB_PSHV1</name>
<feature type="chain" id="PRO_0000406837" description="Uncharacterized protein ORFB">
    <location>
        <begin position="1"/>
        <end position="367"/>
    </location>
</feature>
<feature type="region of interest" description="Disordered" evidence="1">
    <location>
        <begin position="333"/>
        <end position="367"/>
    </location>
</feature>
<feature type="compositionally biased region" description="Low complexity" evidence="1">
    <location>
        <begin position="341"/>
        <end position="351"/>
    </location>
</feature>
<gene>
    <name type="primary">ORFB</name>
</gene>
<protein>
    <recommendedName>
        <fullName>Uncharacterized protein ORFB</fullName>
    </recommendedName>
</protein>
<evidence type="ECO:0000256" key="1">
    <source>
        <dbReference type="SAM" id="MobiDB-lite"/>
    </source>
</evidence>
<dbReference type="EMBL" id="AY372243">
    <property type="protein sequence ID" value="AAQ73696.1"/>
    <property type="molecule type" value="Genomic_DNA"/>
</dbReference>
<dbReference type="RefSeq" id="NP_944390.1">
    <property type="nucleotide sequence ID" value="NC_005264.1"/>
</dbReference>
<dbReference type="GeneID" id="4237760"/>
<dbReference type="KEGG" id="vg:4237760"/>
<dbReference type="Proteomes" id="UP000006840">
    <property type="component" value="Segment"/>
</dbReference>
<organism>
    <name type="scientific">Psittacid herpesvirus 1 (isolate Amazon parrot/-/97-0001/1997)</name>
    <name type="common">PsHV-1</name>
    <name type="synonym">Pacheco's disease virus</name>
    <dbReference type="NCBI Taxonomy" id="670426"/>
    <lineage>
        <taxon>Viruses</taxon>
        <taxon>Duplodnaviria</taxon>
        <taxon>Heunggongvirae</taxon>
        <taxon>Peploviricota</taxon>
        <taxon>Herviviricetes</taxon>
        <taxon>Herpesvirales</taxon>
        <taxon>Orthoherpesviridae</taxon>
        <taxon>Alphaherpesvirinae</taxon>
        <taxon>Iltovirus</taxon>
        <taxon>Iltovirus psittacidalpha1</taxon>
        <taxon>Psittacid alphaherpesvirus 1</taxon>
    </lineage>
</organism>
<proteinExistence type="predicted"/>